<proteinExistence type="evidence at protein level"/>
<name>CYC19_CLITE</name>
<sequence length="30" mass="3150">GSVIKCGESCLLGKCYTPGCTCSRPICKKN</sequence>
<protein>
    <recommendedName>
        <fullName evidence="3">Cliotide T19</fullName>
    </recommendedName>
    <alternativeName>
        <fullName evidence="3">Cyclotide cT19</fullName>
    </alternativeName>
</protein>
<dbReference type="SMR" id="C0HJS6"/>
<dbReference type="GO" id="GO:0042742">
    <property type="term" value="P:defense response to bacterium"/>
    <property type="evidence" value="ECO:0007669"/>
    <property type="project" value="UniProtKB-KW"/>
</dbReference>
<dbReference type="InterPro" id="IPR005535">
    <property type="entry name" value="Cyclotide"/>
</dbReference>
<dbReference type="InterPro" id="IPR036146">
    <property type="entry name" value="Cyclotide_sf"/>
</dbReference>
<dbReference type="Pfam" id="PF03784">
    <property type="entry name" value="Cyclotide"/>
    <property type="match status" value="1"/>
</dbReference>
<dbReference type="PIRSF" id="PIRSF037891">
    <property type="entry name" value="Cycloviolacin"/>
    <property type="match status" value="1"/>
</dbReference>
<dbReference type="SUPFAM" id="SSF57038">
    <property type="entry name" value="Cyclotides"/>
    <property type="match status" value="1"/>
</dbReference>
<dbReference type="PROSITE" id="PS51052">
    <property type="entry name" value="CYCLOTIDE"/>
    <property type="match status" value="1"/>
</dbReference>
<comment type="function">
    <text evidence="1 2">Probably participates in a plant defense mechanism. Active against Gram-negative bacterium E.coli ATCC 700926 (MIC=0.6 uM) under low-salt conditions (PubMed:27007913). Not active against Gram-positive bacterium S.aureus ATCC 12600 up to a concentration of 100 uM under low-salt conditions (PubMed:27007913). Exhibits immunomodulatory activity but no cytotoxicity in vitro.</text>
</comment>
<comment type="tissue specificity">
    <text evidence="2">Expressed in root nodules but not in seed.</text>
</comment>
<comment type="domain">
    <text evidence="4">The presence of a 'disulfide through disulfide knot' structurally defines this protein as a knottin.</text>
</comment>
<comment type="PTM">
    <text evidence="2">Contains 3 disulfide bonds.</text>
</comment>
<comment type="PTM">
    <text evidence="1 2">This is a cyclic peptide.</text>
</comment>
<comment type="mass spectrometry" mass="3123.433" method="MALDI" evidence="2"/>
<comment type="similarity">
    <text evidence="3">Belongs to the cyclotide family. Moebius subfamily.</text>
</comment>
<reference key="1">
    <citation type="journal article" date="2016" name="FEBS J.">
        <title>Immunostimulating and Gram-negative-specific antibacterial cyclotides from the butterfly pea Clitoria ternatea.</title>
        <authorList>
            <person name="Nguyen K.N."/>
            <person name="Nguyen G.K."/>
            <person name="Nguyen P.Q."/>
            <person name="Ang K.H."/>
            <person name="Dedon P.C."/>
            <person name="Tam J.P."/>
        </authorList>
    </citation>
    <scope>PROTEIN SEQUENCE</scope>
    <scope>FUNCTION</scope>
    <scope>TISSUE SPECIFICITY</scope>
    <scope>CYCLIZATION</scope>
    <scope>PRESENCE OF DISULFIDE BONDS</scope>
    <scope>MASS SPECTROMETRY</scope>
    <scope>IDENTIFICATION BY MASS SPECTROMETRY</scope>
</reference>
<organism evidence="3">
    <name type="scientific">Clitoria ternatea</name>
    <name type="common">Butterfly pea</name>
    <dbReference type="NCBI Taxonomy" id="43366"/>
    <lineage>
        <taxon>Eukaryota</taxon>
        <taxon>Viridiplantae</taxon>
        <taxon>Streptophyta</taxon>
        <taxon>Embryophyta</taxon>
        <taxon>Tracheophyta</taxon>
        <taxon>Spermatophyta</taxon>
        <taxon>Magnoliopsida</taxon>
        <taxon>eudicotyledons</taxon>
        <taxon>Gunneridae</taxon>
        <taxon>Pentapetalae</taxon>
        <taxon>rosids</taxon>
        <taxon>fabids</taxon>
        <taxon>Fabales</taxon>
        <taxon>Fabaceae</taxon>
        <taxon>Papilionoideae</taxon>
        <taxon>50 kb inversion clade</taxon>
        <taxon>NPAAA clade</taxon>
        <taxon>indigoferoid/millettioid clade</taxon>
        <taxon>Phaseoleae</taxon>
        <taxon>Clitoria</taxon>
    </lineage>
</organism>
<keyword id="KW-0044">Antibiotic</keyword>
<keyword id="KW-0929">Antimicrobial</keyword>
<keyword id="KW-0903">Direct protein sequencing</keyword>
<keyword id="KW-1015">Disulfide bond</keyword>
<keyword id="KW-0960">Knottin</keyword>
<keyword id="KW-0611">Plant defense</keyword>
<feature type="peptide" id="PRO_0000436316" description="Cliotide T19" evidence="2">
    <location>
        <begin position="1"/>
        <end position="30"/>
    </location>
</feature>
<feature type="disulfide bond" evidence="1">
    <location>
        <begin position="6"/>
        <end position="20"/>
    </location>
</feature>
<feature type="disulfide bond" evidence="1">
    <location>
        <begin position="10"/>
        <end position="22"/>
    </location>
</feature>
<feature type="disulfide bond" evidence="1">
    <location>
        <begin position="15"/>
        <end position="27"/>
    </location>
</feature>
<feature type="cross-link" description="Cyclopeptide (Gly-Asn)" evidence="2">
    <location>
        <begin position="1"/>
        <end position="30"/>
    </location>
</feature>
<accession>C0HJS6</accession>
<evidence type="ECO:0000255" key="1">
    <source>
        <dbReference type="PROSITE-ProRule" id="PRU00395"/>
    </source>
</evidence>
<evidence type="ECO:0000269" key="2">
    <source>
    </source>
</evidence>
<evidence type="ECO:0000303" key="3">
    <source>
    </source>
</evidence>
<evidence type="ECO:0000305" key="4"/>